<name>RL9_PASMU</name>
<gene>
    <name evidence="1" type="primary">rplI</name>
    <name evidence="1" type="synonym">rpl9</name>
    <name type="ordered locus">PM1177</name>
</gene>
<accession>Q9CLP0</accession>
<dbReference type="EMBL" id="AE004439">
    <property type="protein sequence ID" value="AAK03261.1"/>
    <property type="molecule type" value="Genomic_DNA"/>
</dbReference>
<dbReference type="RefSeq" id="WP_005723564.1">
    <property type="nucleotide sequence ID" value="NC_002663.1"/>
</dbReference>
<dbReference type="SMR" id="Q9CLP0"/>
<dbReference type="STRING" id="272843.PM1177"/>
<dbReference type="EnsemblBacteria" id="AAK03261">
    <property type="protein sequence ID" value="AAK03261"/>
    <property type="gene ID" value="PM1177"/>
</dbReference>
<dbReference type="GeneID" id="77206492"/>
<dbReference type="KEGG" id="pmu:PM1177"/>
<dbReference type="HOGENOM" id="CLU_078938_4_1_6"/>
<dbReference type="OrthoDB" id="9788336at2"/>
<dbReference type="Proteomes" id="UP000000809">
    <property type="component" value="Chromosome"/>
</dbReference>
<dbReference type="GO" id="GO:1990904">
    <property type="term" value="C:ribonucleoprotein complex"/>
    <property type="evidence" value="ECO:0007669"/>
    <property type="project" value="UniProtKB-KW"/>
</dbReference>
<dbReference type="GO" id="GO:0005840">
    <property type="term" value="C:ribosome"/>
    <property type="evidence" value="ECO:0007669"/>
    <property type="project" value="UniProtKB-KW"/>
</dbReference>
<dbReference type="GO" id="GO:0019843">
    <property type="term" value="F:rRNA binding"/>
    <property type="evidence" value="ECO:0007669"/>
    <property type="project" value="UniProtKB-UniRule"/>
</dbReference>
<dbReference type="GO" id="GO:0003735">
    <property type="term" value="F:structural constituent of ribosome"/>
    <property type="evidence" value="ECO:0007669"/>
    <property type="project" value="InterPro"/>
</dbReference>
<dbReference type="GO" id="GO:0006412">
    <property type="term" value="P:translation"/>
    <property type="evidence" value="ECO:0007669"/>
    <property type="project" value="UniProtKB-UniRule"/>
</dbReference>
<dbReference type="FunFam" id="3.10.430.100:FF:000001">
    <property type="entry name" value="50S ribosomal protein L9"/>
    <property type="match status" value="1"/>
</dbReference>
<dbReference type="FunFam" id="3.40.5.10:FF:000001">
    <property type="entry name" value="50S ribosomal protein L9"/>
    <property type="match status" value="1"/>
</dbReference>
<dbReference type="Gene3D" id="3.10.430.100">
    <property type="entry name" value="Ribosomal protein L9, C-terminal domain"/>
    <property type="match status" value="1"/>
</dbReference>
<dbReference type="Gene3D" id="3.40.5.10">
    <property type="entry name" value="Ribosomal protein L9, N-terminal domain"/>
    <property type="match status" value="1"/>
</dbReference>
<dbReference type="HAMAP" id="MF_00503">
    <property type="entry name" value="Ribosomal_bL9"/>
    <property type="match status" value="1"/>
</dbReference>
<dbReference type="InterPro" id="IPR000244">
    <property type="entry name" value="Ribosomal_bL9"/>
</dbReference>
<dbReference type="InterPro" id="IPR009027">
    <property type="entry name" value="Ribosomal_bL9/RNase_H1_N"/>
</dbReference>
<dbReference type="InterPro" id="IPR020594">
    <property type="entry name" value="Ribosomal_bL9_bac/chp"/>
</dbReference>
<dbReference type="InterPro" id="IPR020069">
    <property type="entry name" value="Ribosomal_bL9_C"/>
</dbReference>
<dbReference type="InterPro" id="IPR036791">
    <property type="entry name" value="Ribosomal_bL9_C_sf"/>
</dbReference>
<dbReference type="InterPro" id="IPR020070">
    <property type="entry name" value="Ribosomal_bL9_N"/>
</dbReference>
<dbReference type="InterPro" id="IPR036935">
    <property type="entry name" value="Ribosomal_bL9_N_sf"/>
</dbReference>
<dbReference type="NCBIfam" id="TIGR00158">
    <property type="entry name" value="L9"/>
    <property type="match status" value="1"/>
</dbReference>
<dbReference type="PANTHER" id="PTHR21368">
    <property type="entry name" value="50S RIBOSOMAL PROTEIN L9"/>
    <property type="match status" value="1"/>
</dbReference>
<dbReference type="Pfam" id="PF03948">
    <property type="entry name" value="Ribosomal_L9_C"/>
    <property type="match status" value="1"/>
</dbReference>
<dbReference type="Pfam" id="PF01281">
    <property type="entry name" value="Ribosomal_L9_N"/>
    <property type="match status" value="1"/>
</dbReference>
<dbReference type="SUPFAM" id="SSF55658">
    <property type="entry name" value="L9 N-domain-like"/>
    <property type="match status" value="1"/>
</dbReference>
<dbReference type="SUPFAM" id="SSF55653">
    <property type="entry name" value="Ribosomal protein L9 C-domain"/>
    <property type="match status" value="1"/>
</dbReference>
<dbReference type="PROSITE" id="PS00651">
    <property type="entry name" value="RIBOSOMAL_L9"/>
    <property type="match status" value="1"/>
</dbReference>
<evidence type="ECO:0000255" key="1">
    <source>
        <dbReference type="HAMAP-Rule" id="MF_00503"/>
    </source>
</evidence>
<evidence type="ECO:0000305" key="2"/>
<feature type="chain" id="PRO_0000176660" description="Large ribosomal subunit protein bL9">
    <location>
        <begin position="1"/>
        <end position="149"/>
    </location>
</feature>
<reference key="1">
    <citation type="journal article" date="2001" name="Proc. Natl. Acad. Sci. U.S.A.">
        <title>Complete genomic sequence of Pasteurella multocida Pm70.</title>
        <authorList>
            <person name="May B.J."/>
            <person name="Zhang Q."/>
            <person name="Li L.L."/>
            <person name="Paustian M.L."/>
            <person name="Whittam T.S."/>
            <person name="Kapur V."/>
        </authorList>
    </citation>
    <scope>NUCLEOTIDE SEQUENCE [LARGE SCALE GENOMIC DNA]</scope>
    <source>
        <strain>Pm70</strain>
    </source>
</reference>
<keyword id="KW-1185">Reference proteome</keyword>
<keyword id="KW-0687">Ribonucleoprotein</keyword>
<keyword id="KW-0689">Ribosomal protein</keyword>
<keyword id="KW-0694">RNA-binding</keyword>
<keyword id="KW-0699">rRNA-binding</keyword>
<proteinExistence type="inferred from homology"/>
<protein>
    <recommendedName>
        <fullName evidence="1">Large ribosomal subunit protein bL9</fullName>
    </recommendedName>
    <alternativeName>
        <fullName evidence="2">50S ribosomal protein L9</fullName>
    </alternativeName>
</protein>
<comment type="function">
    <text evidence="1">Binds to the 23S rRNA.</text>
</comment>
<comment type="similarity">
    <text evidence="1">Belongs to the bacterial ribosomal protein bL9 family.</text>
</comment>
<sequence length="149" mass="15740">MQVILLDKVVHLGNIGDQVNVKSGFARNFLIPQGKAVMATKANIEYFEARRAELEAKAAEVLAAAQARAAKLAELGSVTIASKAGDEGRLFGSITTRDVADAVTAAGVEVAKSEVRLSTGPIRTLGDHEVKFQLHGEVFATINVIVVAE</sequence>
<organism>
    <name type="scientific">Pasteurella multocida (strain Pm70)</name>
    <dbReference type="NCBI Taxonomy" id="272843"/>
    <lineage>
        <taxon>Bacteria</taxon>
        <taxon>Pseudomonadati</taxon>
        <taxon>Pseudomonadota</taxon>
        <taxon>Gammaproteobacteria</taxon>
        <taxon>Pasteurellales</taxon>
        <taxon>Pasteurellaceae</taxon>
        <taxon>Pasteurella</taxon>
    </lineage>
</organism>